<protein>
    <recommendedName>
        <fullName evidence="1">Elongation factor P--(R)-beta-lysine ligase</fullName>
        <shortName evidence="1">EF-P--(R)-beta-lysine ligase</shortName>
        <ecNumber evidence="1">6.3.2.-</ecNumber>
    </recommendedName>
    <alternativeName>
        <fullName evidence="1">EF-P post-translational modification enzyme A</fullName>
    </alternativeName>
    <alternativeName>
        <fullName evidence="1">EF-P-lysine lysyltransferase</fullName>
    </alternativeName>
</protein>
<feature type="chain" id="PRO_1000023619" description="Elongation factor P--(R)-beta-lysine ligase">
    <location>
        <begin position="1"/>
        <end position="325"/>
    </location>
</feature>
<feature type="binding site" evidence="1">
    <location>
        <begin position="76"/>
        <end position="78"/>
    </location>
    <ligand>
        <name>substrate</name>
    </ligand>
</feature>
<feature type="binding site" evidence="1">
    <location>
        <begin position="100"/>
        <end position="102"/>
    </location>
    <ligand>
        <name>ATP</name>
        <dbReference type="ChEBI" id="CHEBI:30616"/>
    </ligand>
</feature>
<feature type="binding site" evidence="1">
    <location>
        <position position="109"/>
    </location>
    <ligand>
        <name>ATP</name>
        <dbReference type="ChEBI" id="CHEBI:30616"/>
    </ligand>
</feature>
<feature type="binding site" evidence="1">
    <location>
        <position position="118"/>
    </location>
    <ligand>
        <name>substrate</name>
    </ligand>
</feature>
<feature type="binding site" evidence="1">
    <location>
        <begin position="244"/>
        <end position="245"/>
    </location>
    <ligand>
        <name>ATP</name>
        <dbReference type="ChEBI" id="CHEBI:30616"/>
    </ligand>
</feature>
<feature type="binding site" evidence="1">
    <location>
        <position position="251"/>
    </location>
    <ligand>
        <name>substrate</name>
    </ligand>
</feature>
<feature type="binding site" evidence="1">
    <location>
        <position position="300"/>
    </location>
    <ligand>
        <name>ATP</name>
        <dbReference type="ChEBI" id="CHEBI:30616"/>
    </ligand>
</feature>
<sequence>MSETATWQPSASIPNLLKRAAIMTEIRRFFADRGVLEVETPCMSQATVTDIHLFPFETRFVGPGHSQGMNLYLMTSPEYHMKRLLVAGCGPVFQLCRSFRNEEMGRHHNPEFTMLEWYRPHYDMYRLMNEVDDLLQQVLECQPAESLSYQQVFQRHLEIDPLSADKTQLREAAAKLDLSNIADTEEDRDTLLQLLFTMGVEPHIGKEKPTFVYHFPASQASLAQISTEDHRVAERFEVYFKGIELANGFHELTDAREQQQRFEQDNRKRAARGLPQQPIDNNLLEALKVGMPDCSGVALGVDRLVMLALGAESLAEVIAFTVDRA</sequence>
<dbReference type="EC" id="6.3.2.-" evidence="1"/>
<dbReference type="EMBL" id="CP000822">
    <property type="protein sequence ID" value="ABV14754.1"/>
    <property type="molecule type" value="Genomic_DNA"/>
</dbReference>
<dbReference type="RefSeq" id="WP_012134451.1">
    <property type="nucleotide sequence ID" value="NC_009792.1"/>
</dbReference>
<dbReference type="SMR" id="A8AMP1"/>
<dbReference type="STRING" id="290338.CKO_03677"/>
<dbReference type="GeneID" id="45137381"/>
<dbReference type="KEGG" id="cko:CKO_03677"/>
<dbReference type="HOGENOM" id="CLU_008255_1_1_6"/>
<dbReference type="OrthoDB" id="9802326at2"/>
<dbReference type="Proteomes" id="UP000008148">
    <property type="component" value="Chromosome"/>
</dbReference>
<dbReference type="GO" id="GO:0005829">
    <property type="term" value="C:cytosol"/>
    <property type="evidence" value="ECO:0007669"/>
    <property type="project" value="TreeGrafter"/>
</dbReference>
<dbReference type="GO" id="GO:0016880">
    <property type="term" value="F:acid-ammonia (or amide) ligase activity"/>
    <property type="evidence" value="ECO:0007669"/>
    <property type="project" value="UniProtKB-UniRule"/>
</dbReference>
<dbReference type="GO" id="GO:0005524">
    <property type="term" value="F:ATP binding"/>
    <property type="evidence" value="ECO:0007669"/>
    <property type="project" value="UniProtKB-UniRule"/>
</dbReference>
<dbReference type="GO" id="GO:0004824">
    <property type="term" value="F:lysine-tRNA ligase activity"/>
    <property type="evidence" value="ECO:0007669"/>
    <property type="project" value="InterPro"/>
</dbReference>
<dbReference type="GO" id="GO:0000049">
    <property type="term" value="F:tRNA binding"/>
    <property type="evidence" value="ECO:0007669"/>
    <property type="project" value="TreeGrafter"/>
</dbReference>
<dbReference type="GO" id="GO:0006430">
    <property type="term" value="P:lysyl-tRNA aminoacylation"/>
    <property type="evidence" value="ECO:0007669"/>
    <property type="project" value="InterPro"/>
</dbReference>
<dbReference type="FunFam" id="3.30.930.10:FF:000017">
    <property type="entry name" value="Elongation factor P--(R)-beta-lysine ligase"/>
    <property type="match status" value="1"/>
</dbReference>
<dbReference type="Gene3D" id="3.30.930.10">
    <property type="entry name" value="Bira Bifunctional Protein, Domain 2"/>
    <property type="match status" value="1"/>
</dbReference>
<dbReference type="HAMAP" id="MF_00174">
    <property type="entry name" value="EF_P_modif_A"/>
    <property type="match status" value="1"/>
</dbReference>
<dbReference type="InterPro" id="IPR004364">
    <property type="entry name" value="Aa-tRNA-synt_II"/>
</dbReference>
<dbReference type="InterPro" id="IPR006195">
    <property type="entry name" value="aa-tRNA-synth_II"/>
</dbReference>
<dbReference type="InterPro" id="IPR045864">
    <property type="entry name" value="aa-tRNA-synth_II/BPL/LPL"/>
</dbReference>
<dbReference type="InterPro" id="IPR004525">
    <property type="entry name" value="EpmA"/>
</dbReference>
<dbReference type="InterPro" id="IPR018149">
    <property type="entry name" value="Lys-tRNA-synth_II_C"/>
</dbReference>
<dbReference type="NCBIfam" id="TIGR00462">
    <property type="entry name" value="genX"/>
    <property type="match status" value="1"/>
</dbReference>
<dbReference type="NCBIfam" id="NF006828">
    <property type="entry name" value="PRK09350.1"/>
    <property type="match status" value="1"/>
</dbReference>
<dbReference type="PANTHER" id="PTHR42918:SF6">
    <property type="entry name" value="ELONGATION FACTOR P--(R)-BETA-LYSINE LIGASE"/>
    <property type="match status" value="1"/>
</dbReference>
<dbReference type="PANTHER" id="PTHR42918">
    <property type="entry name" value="LYSYL-TRNA SYNTHETASE"/>
    <property type="match status" value="1"/>
</dbReference>
<dbReference type="Pfam" id="PF00152">
    <property type="entry name" value="tRNA-synt_2"/>
    <property type="match status" value="1"/>
</dbReference>
<dbReference type="PRINTS" id="PR00982">
    <property type="entry name" value="TRNASYNTHLYS"/>
</dbReference>
<dbReference type="SUPFAM" id="SSF55681">
    <property type="entry name" value="Class II aaRS and biotin synthetases"/>
    <property type="match status" value="1"/>
</dbReference>
<dbReference type="PROSITE" id="PS50862">
    <property type="entry name" value="AA_TRNA_LIGASE_II"/>
    <property type="match status" value="1"/>
</dbReference>
<organism>
    <name type="scientific">Citrobacter koseri (strain ATCC BAA-895 / CDC 4225-83 / SGSC4696)</name>
    <dbReference type="NCBI Taxonomy" id="290338"/>
    <lineage>
        <taxon>Bacteria</taxon>
        <taxon>Pseudomonadati</taxon>
        <taxon>Pseudomonadota</taxon>
        <taxon>Gammaproteobacteria</taxon>
        <taxon>Enterobacterales</taxon>
        <taxon>Enterobacteriaceae</taxon>
        <taxon>Citrobacter</taxon>
    </lineage>
</organism>
<keyword id="KW-0067">ATP-binding</keyword>
<keyword id="KW-0436">Ligase</keyword>
<keyword id="KW-0547">Nucleotide-binding</keyword>
<keyword id="KW-1185">Reference proteome</keyword>
<name>EPMA_CITK8</name>
<proteinExistence type="inferred from homology"/>
<evidence type="ECO:0000255" key="1">
    <source>
        <dbReference type="HAMAP-Rule" id="MF_00174"/>
    </source>
</evidence>
<reference key="1">
    <citation type="submission" date="2007-08" db="EMBL/GenBank/DDBJ databases">
        <authorList>
            <consortium name="The Citrobacter koseri Genome Sequencing Project"/>
            <person name="McClelland M."/>
            <person name="Sanderson E.K."/>
            <person name="Porwollik S."/>
            <person name="Spieth J."/>
            <person name="Clifton W.S."/>
            <person name="Latreille P."/>
            <person name="Courtney L."/>
            <person name="Wang C."/>
            <person name="Pepin K."/>
            <person name="Bhonagiri V."/>
            <person name="Nash W."/>
            <person name="Johnson M."/>
            <person name="Thiruvilangam P."/>
            <person name="Wilson R."/>
        </authorList>
    </citation>
    <scope>NUCLEOTIDE SEQUENCE [LARGE SCALE GENOMIC DNA]</scope>
    <source>
        <strain>ATCC BAA-895 / CDC 4225-83 / SGSC4696</strain>
    </source>
</reference>
<gene>
    <name evidence="1" type="primary">epmA</name>
    <name type="synonym">yjeA</name>
    <name type="ordered locus">CKO_03677</name>
</gene>
<accession>A8AMP1</accession>
<comment type="function">
    <text evidence="1">With EpmB is involved in the beta-lysylation step of the post-translational modification of translation elongation factor P (EF-P). Catalyzes the ATP-dependent activation of (R)-beta-lysine produced by EpmB, forming a lysyl-adenylate, from which the beta-lysyl moiety is then transferred to the epsilon-amino group of a conserved specific lysine residue in EF-P.</text>
</comment>
<comment type="catalytic activity">
    <reaction evidence="1">
        <text>D-beta-lysine + L-lysyl-[protein] + ATP = N(6)-((3R)-3,6-diaminohexanoyl)-L-lysyl-[protein] + AMP + diphosphate + H(+)</text>
        <dbReference type="Rhea" id="RHEA:83435"/>
        <dbReference type="Rhea" id="RHEA-COMP:9752"/>
        <dbReference type="Rhea" id="RHEA-COMP:20131"/>
        <dbReference type="ChEBI" id="CHEBI:15378"/>
        <dbReference type="ChEBI" id="CHEBI:29969"/>
        <dbReference type="ChEBI" id="CHEBI:30616"/>
        <dbReference type="ChEBI" id="CHEBI:33019"/>
        <dbReference type="ChEBI" id="CHEBI:84138"/>
        <dbReference type="ChEBI" id="CHEBI:156053"/>
        <dbReference type="ChEBI" id="CHEBI:456215"/>
    </reaction>
    <physiologicalReaction direction="left-to-right" evidence="1">
        <dbReference type="Rhea" id="RHEA:83436"/>
    </physiologicalReaction>
</comment>
<comment type="subunit">
    <text evidence="1">Homodimer.</text>
</comment>
<comment type="similarity">
    <text evidence="1">Belongs to the class-II aminoacyl-tRNA synthetase family. EpmA subfamily.</text>
</comment>